<reference key="1">
    <citation type="journal article" date="2005" name="Nature">
        <title>The genome of the social amoeba Dictyostelium discoideum.</title>
        <authorList>
            <person name="Eichinger L."/>
            <person name="Pachebat J.A."/>
            <person name="Gloeckner G."/>
            <person name="Rajandream M.A."/>
            <person name="Sucgang R."/>
            <person name="Berriman M."/>
            <person name="Song J."/>
            <person name="Olsen R."/>
            <person name="Szafranski K."/>
            <person name="Xu Q."/>
            <person name="Tunggal B."/>
            <person name="Kummerfeld S."/>
            <person name="Madera M."/>
            <person name="Konfortov B.A."/>
            <person name="Rivero F."/>
            <person name="Bankier A.T."/>
            <person name="Lehmann R."/>
            <person name="Hamlin N."/>
            <person name="Davies R."/>
            <person name="Gaudet P."/>
            <person name="Fey P."/>
            <person name="Pilcher K."/>
            <person name="Chen G."/>
            <person name="Saunders D."/>
            <person name="Sodergren E.J."/>
            <person name="Davis P."/>
            <person name="Kerhornou A."/>
            <person name="Nie X."/>
            <person name="Hall N."/>
            <person name="Anjard C."/>
            <person name="Hemphill L."/>
            <person name="Bason N."/>
            <person name="Farbrother P."/>
            <person name="Desany B."/>
            <person name="Just E."/>
            <person name="Morio T."/>
            <person name="Rost R."/>
            <person name="Churcher C.M."/>
            <person name="Cooper J."/>
            <person name="Haydock S."/>
            <person name="van Driessche N."/>
            <person name="Cronin A."/>
            <person name="Goodhead I."/>
            <person name="Muzny D.M."/>
            <person name="Mourier T."/>
            <person name="Pain A."/>
            <person name="Lu M."/>
            <person name="Harper D."/>
            <person name="Lindsay R."/>
            <person name="Hauser H."/>
            <person name="James K.D."/>
            <person name="Quiles M."/>
            <person name="Madan Babu M."/>
            <person name="Saito T."/>
            <person name="Buchrieser C."/>
            <person name="Wardroper A."/>
            <person name="Felder M."/>
            <person name="Thangavelu M."/>
            <person name="Johnson D."/>
            <person name="Knights A."/>
            <person name="Loulseged H."/>
            <person name="Mungall K.L."/>
            <person name="Oliver K."/>
            <person name="Price C."/>
            <person name="Quail M.A."/>
            <person name="Urushihara H."/>
            <person name="Hernandez J."/>
            <person name="Rabbinowitsch E."/>
            <person name="Steffen D."/>
            <person name="Sanders M."/>
            <person name="Ma J."/>
            <person name="Kohara Y."/>
            <person name="Sharp S."/>
            <person name="Simmonds M.N."/>
            <person name="Spiegler S."/>
            <person name="Tivey A."/>
            <person name="Sugano S."/>
            <person name="White B."/>
            <person name="Walker D."/>
            <person name="Woodward J.R."/>
            <person name="Winckler T."/>
            <person name="Tanaka Y."/>
            <person name="Shaulsky G."/>
            <person name="Schleicher M."/>
            <person name="Weinstock G.M."/>
            <person name="Rosenthal A."/>
            <person name="Cox E.C."/>
            <person name="Chisholm R.L."/>
            <person name="Gibbs R.A."/>
            <person name="Loomis W.F."/>
            <person name="Platzer M."/>
            <person name="Kay R.R."/>
            <person name="Williams J.G."/>
            <person name="Dear P.H."/>
            <person name="Noegel A.A."/>
            <person name="Barrell B.G."/>
            <person name="Kuspa A."/>
        </authorList>
    </citation>
    <scope>NUCLEOTIDE SEQUENCE [LARGE SCALE GENOMIC DNA]</scope>
    <source>
        <strain>AX4</strain>
    </source>
</reference>
<reference key="2">
    <citation type="journal article" date="2001" name="Nucleic Acids Res.">
        <title>The Dictyostelium discoideum family of Rho-related proteins.</title>
        <authorList>
            <person name="Rivero F."/>
            <person name="Dislich H."/>
            <person name="Gloeckner G."/>
            <person name="Noegel A.A."/>
        </authorList>
    </citation>
    <scope>NUCLEOTIDE SEQUENCE [GENOMIC DNA] OF 1371-1527</scope>
    <source>
        <strain>AX4</strain>
    </source>
</reference>
<evidence type="ECO:0000255" key="1"/>
<evidence type="ECO:0000256" key="2">
    <source>
        <dbReference type="SAM" id="MobiDB-lite"/>
    </source>
</evidence>
<keyword id="KW-0175">Coiled coil</keyword>
<keyword id="KW-1185">Reference proteome</keyword>
<gene>
    <name type="ORF">DDB_G0292556</name>
</gene>
<feature type="chain" id="PRO_0000393122" description="Putative uncharacterized protein DDB_G0292556">
    <location>
        <begin position="1"/>
        <end position="1527"/>
    </location>
</feature>
<feature type="region of interest" description="Disordered" evidence="2">
    <location>
        <begin position="683"/>
        <end position="734"/>
    </location>
</feature>
<feature type="coiled-coil region" evidence="1">
    <location>
        <begin position="262"/>
        <end position="293"/>
    </location>
</feature>
<feature type="coiled-coil region" evidence="1">
    <location>
        <begin position="699"/>
        <end position="751"/>
    </location>
</feature>
<feature type="coiled-coil region" evidence="1">
    <location>
        <begin position="905"/>
        <end position="932"/>
    </location>
</feature>
<feature type="coiled-coil region" evidence="1">
    <location>
        <begin position="1217"/>
        <end position="1255"/>
    </location>
</feature>
<feature type="compositionally biased region" description="Low complexity" evidence="2">
    <location>
        <begin position="700"/>
        <end position="728"/>
    </location>
</feature>
<accession>Q54CY2</accession>
<accession>Q9GPR1</accession>
<proteinExistence type="predicted"/>
<protein>
    <recommendedName>
        <fullName>Putative uncharacterized protein DDB_G0292556</fullName>
    </recommendedName>
</protein>
<dbReference type="EMBL" id="AAFI02000194">
    <property type="protein sequence ID" value="EAL61081.1"/>
    <property type="molecule type" value="Genomic_DNA"/>
</dbReference>
<dbReference type="EMBL" id="AF310896">
    <property type="protein sequence ID" value="AAG45139.1"/>
    <property type="molecule type" value="Genomic_DNA"/>
</dbReference>
<dbReference type="RefSeq" id="XP_629538.1">
    <property type="nucleotide sequence ID" value="XM_629536.1"/>
</dbReference>
<dbReference type="SMR" id="Q54CY2"/>
<dbReference type="STRING" id="44689.Q54CY2"/>
<dbReference type="PaxDb" id="44689-DDB0185174"/>
<dbReference type="EnsemblProtists" id="EAL61081">
    <property type="protein sequence ID" value="EAL61081"/>
    <property type="gene ID" value="DDB_G0292556"/>
</dbReference>
<dbReference type="GeneID" id="8628796"/>
<dbReference type="KEGG" id="ddi:DDB_G0292556"/>
<dbReference type="dictyBase" id="DDB_G0292556"/>
<dbReference type="VEuPathDB" id="AmoebaDB:DDB_G0292556"/>
<dbReference type="HOGENOM" id="CLU_247457_0_0_1"/>
<dbReference type="InParanoid" id="Q54CY2"/>
<dbReference type="PRO" id="PR:Q54CY2"/>
<dbReference type="Proteomes" id="UP000002195">
    <property type="component" value="Chromosome 6"/>
</dbReference>
<dbReference type="InterPro" id="IPR052145">
    <property type="entry name" value="Mediator/Homeobox_domain"/>
</dbReference>
<dbReference type="PANTHER" id="PTHR24330">
    <property type="entry name" value="HOMEOBOX PROTEIN BARH-LIKE"/>
    <property type="match status" value="1"/>
</dbReference>
<dbReference type="PANTHER" id="PTHR24330:SF19">
    <property type="entry name" value="MEDIATOR OF RNA POLYMERASE II TRANSCRIPTION SUBUNIT 29"/>
    <property type="match status" value="1"/>
</dbReference>
<dbReference type="SUPFAM" id="SSF81995">
    <property type="entry name" value="beta-sandwich domain of Sec23/24"/>
    <property type="match status" value="1"/>
</dbReference>
<sequence>MNRVSVLSKYQCLKINSPNRFFSKYFTTSTINSTKITNDQSQTNSAGKEISQPILKSQDKLKKSILKTSTDTNFLKDINKKHRQHYIKPQKDDENIILKTLNDLKTNNLNTKELISDRLSELFLNKEMIKLISENEIESINEIFKIVLGAKKSQQPPTVAFFTKSFLNKSSKEFKMKLDSLPIIVYFLSVFESKDIMKSSDSDSDSTATNNYLTVGKGISKKFIQNFQDSISSELDITDLQEHLSDMIKLSKFSRLLGYLTNVEISRDKIKKLKDKNEIFNQLINEFGENINEIEFQNLFKNEIHFISFLLTLSRNQIITILSISNNSCYEEEEEVEEVEEVNVKGEGGELFKRVDKYEDNNKGIFNQNKIKSLIENIPVSKVRERLYWFLLMAKLRYPISENYFNDIEISLHYEKDPSFILFFFNHFKIFGYIPSDSSEAKIFQRYVRVATLDEALHYFDSIKKKPQSLNIIMITHLLLAMNKFNNQLDRKIIIDSTTNTTTNTTINTTINNNKIKKYQRSIENEMLTLYSSKIKDIIGSNSSLYNFTLSQLLHGEKWRKVLFNTLVTQLIEKHINSVTDETLLIINEYFSIHKDDVILKKLYELSKKIHLSKELLSNLTIQFLIHKRDYSNAINSLIELYKQETPILKSTLKLLIKSDPTHPILFEFYKTLPQQFELIEPTNQEQEQDQQDQPPPPQQQQEQQQEQQQQQEQQQQQDQQQQDQQQDQQEKQQIKEIKPKLKEKLESEKLINSELFLECINDPMKLYRILDGKIEILASTFQSIVMKSLESGKYQFVESIISKRFGDSSKSIDKHLLSKLITIPNLPISKDDPYNIEKLLLTNNRSENLALYNKLFNLSLNNGLLNCAKNYILKIIQQSNQRLVTSLCYQGEEALIYSYILSLNNLNIINNNQENNNNNNNDLKETIENQIIKWIESVFGCNSLNEINNDDFVFSILLGFHHSTSAYYKKQIGNLNEQQQLPSSLYLKIRSNLMQVINKYFDLIVLDRMILSSYGLESKYYGEAIDFQKDFISMITINELYQYTILKLNLLEKKNNNNNNNNNNNSYYRISIDKKFIENNDQSFNEIDLLLKNISTKQISVIVPFLMGFIENPSLMKYLSVILSNDLNKYDTATTTTTTTTIGNNFIQRLMESSSNSKEIDFLNISNTFFFKYFISVGDLKSAFKVHFKQIHILIRFRLIQDILKNQPLVMDHIFKIISSELELEQQQQQQQQQQQQQQQQQQQQQQQQQQKSSSPSLDYGLIESLLSVTSILNDSKSIHFSLKLYNLASEHAKLNNSRIPLSITNSKDLVLSGFKNRNDHFQLSENLKISDIEKQMKQTRGAGADGADEIIIKNHLTSSQLLNDIKYILIHSNYKQLKGIGFGVLRGDIPFTINDKIKVFLLVEAFAAEEGREKVNSFLNTPSLLNNSLDFELLRTPKITKLISFIFRTNSSIKHDSNYFPEFSPDFLPNKFKFYSAHLEDINNNDNDNSIQDISNIVNCNSGPESFYYRKVLKYFFKKRILKNL</sequence>
<name>Y2556_DICDI</name>
<organism>
    <name type="scientific">Dictyostelium discoideum</name>
    <name type="common">Social amoeba</name>
    <dbReference type="NCBI Taxonomy" id="44689"/>
    <lineage>
        <taxon>Eukaryota</taxon>
        <taxon>Amoebozoa</taxon>
        <taxon>Evosea</taxon>
        <taxon>Eumycetozoa</taxon>
        <taxon>Dictyostelia</taxon>
        <taxon>Dictyosteliales</taxon>
        <taxon>Dictyosteliaceae</taxon>
        <taxon>Dictyostelium</taxon>
    </lineage>
</organism>